<accession>B8JCU2</accession>
<organism>
    <name type="scientific">Anaeromyxobacter dehalogenans (strain 2CP-1 / ATCC BAA-258)</name>
    <dbReference type="NCBI Taxonomy" id="455488"/>
    <lineage>
        <taxon>Bacteria</taxon>
        <taxon>Pseudomonadati</taxon>
        <taxon>Myxococcota</taxon>
        <taxon>Myxococcia</taxon>
        <taxon>Myxococcales</taxon>
        <taxon>Cystobacterineae</taxon>
        <taxon>Anaeromyxobacteraceae</taxon>
        <taxon>Anaeromyxobacter</taxon>
    </lineage>
</organism>
<name>ATP6_ANAD2</name>
<gene>
    <name evidence="1" type="primary">atpB</name>
    <name type="ordered locus">A2cp1_4495</name>
</gene>
<comment type="function">
    <text evidence="1">Key component of the proton channel; it plays a direct role in the translocation of protons across the membrane.</text>
</comment>
<comment type="subunit">
    <text evidence="1">F-type ATPases have 2 components, CF(1) - the catalytic core - and CF(0) - the membrane proton channel. CF(1) has five subunits: alpha(3), beta(3), gamma(1), delta(1), epsilon(1). CF(0) has three main subunits: a(1), b(2) and c(9-12). The alpha and beta chains form an alternating ring which encloses part of the gamma chain. CF(1) is attached to CF(0) by a central stalk formed by the gamma and epsilon chains, while a peripheral stalk is formed by the delta and b chains.</text>
</comment>
<comment type="subcellular location">
    <subcellularLocation>
        <location evidence="1">Cell inner membrane</location>
        <topology evidence="1">Multi-pass membrane protein</topology>
    </subcellularLocation>
</comment>
<comment type="similarity">
    <text evidence="1">Belongs to the ATPase A chain family.</text>
</comment>
<feature type="chain" id="PRO_1000184275" description="ATP synthase subunit a">
    <location>
        <begin position="1"/>
        <end position="384"/>
    </location>
</feature>
<feature type="transmembrane region" description="Helical" evidence="1">
    <location>
        <begin position="131"/>
        <end position="151"/>
    </location>
</feature>
<feature type="transmembrane region" description="Helical" evidence="1">
    <location>
        <begin position="189"/>
        <end position="209"/>
    </location>
</feature>
<feature type="transmembrane region" description="Helical" evidence="1">
    <location>
        <begin position="218"/>
        <end position="238"/>
    </location>
</feature>
<feature type="transmembrane region" description="Helical" evidence="1">
    <location>
        <begin position="258"/>
        <end position="278"/>
    </location>
</feature>
<feature type="transmembrane region" description="Helical" evidence="1">
    <location>
        <begin position="293"/>
        <end position="313"/>
    </location>
</feature>
<feature type="transmembrane region" description="Helical" evidence="1">
    <location>
        <begin position="319"/>
        <end position="339"/>
    </location>
</feature>
<feature type="region of interest" description="Disordered" evidence="2">
    <location>
        <begin position="22"/>
        <end position="60"/>
    </location>
</feature>
<feature type="region of interest" description="Disordered" evidence="2">
    <location>
        <begin position="355"/>
        <end position="384"/>
    </location>
</feature>
<sequence length="384" mass="40368">MTAATLVTLALSLSLAQHDAAPAPAAAPVEQHGAPAPEAAAPDAHAAPAGEHGAAVEAHAAAAGEHGDAAGHEGGHDESLGAVMMHHVTDGYVIEHPGFCHGALAWNCEWDLRETFGDALRFGALDMTPTKHVMMMWFASALLLVVVLAAVRKKSLVPRGLYNFIEVLVAFVRNEIAVKNIGERDADRFVPYLVTAFFFILFLNLFGLIPFSATATANLSVTVALALFTFLITQYAAIRAMGVGGYLAHLTGGVPKSLAPLWIIMIPVEFLGLFTKPFALTVRLFANMVAGHFVILALLGLIFALGTPWVAFGSVPMALGIFLLELFVAFVQAYIFTMLSSLFIGAGLVHHGDDHGHAEEHGHAGPGMGSEHGSHVAGASPGHG</sequence>
<protein>
    <recommendedName>
        <fullName evidence="1">ATP synthase subunit a</fullName>
    </recommendedName>
    <alternativeName>
        <fullName evidence="1">ATP synthase F0 sector subunit a</fullName>
    </alternativeName>
    <alternativeName>
        <fullName evidence="1">F-ATPase subunit 6</fullName>
    </alternativeName>
</protein>
<evidence type="ECO:0000255" key="1">
    <source>
        <dbReference type="HAMAP-Rule" id="MF_01393"/>
    </source>
</evidence>
<evidence type="ECO:0000256" key="2">
    <source>
        <dbReference type="SAM" id="MobiDB-lite"/>
    </source>
</evidence>
<reference key="1">
    <citation type="submission" date="2009-01" db="EMBL/GenBank/DDBJ databases">
        <title>Complete sequence of Anaeromyxobacter dehalogenans 2CP-1.</title>
        <authorList>
            <person name="Lucas S."/>
            <person name="Copeland A."/>
            <person name="Lapidus A."/>
            <person name="Glavina del Rio T."/>
            <person name="Dalin E."/>
            <person name="Tice H."/>
            <person name="Bruce D."/>
            <person name="Goodwin L."/>
            <person name="Pitluck S."/>
            <person name="Saunders E."/>
            <person name="Brettin T."/>
            <person name="Detter J.C."/>
            <person name="Han C."/>
            <person name="Larimer F."/>
            <person name="Land M."/>
            <person name="Hauser L."/>
            <person name="Kyrpides N."/>
            <person name="Ovchinnikova G."/>
            <person name="Beliaev A.S."/>
            <person name="Richardson P."/>
        </authorList>
    </citation>
    <scope>NUCLEOTIDE SEQUENCE [LARGE SCALE GENOMIC DNA]</scope>
    <source>
        <strain>2CP-1 / ATCC BAA-258</strain>
    </source>
</reference>
<proteinExistence type="inferred from homology"/>
<keyword id="KW-0066">ATP synthesis</keyword>
<keyword id="KW-0997">Cell inner membrane</keyword>
<keyword id="KW-1003">Cell membrane</keyword>
<keyword id="KW-0138">CF(0)</keyword>
<keyword id="KW-0375">Hydrogen ion transport</keyword>
<keyword id="KW-0406">Ion transport</keyword>
<keyword id="KW-0472">Membrane</keyword>
<keyword id="KW-0812">Transmembrane</keyword>
<keyword id="KW-1133">Transmembrane helix</keyword>
<keyword id="KW-0813">Transport</keyword>
<dbReference type="EMBL" id="CP001359">
    <property type="protein sequence ID" value="ACL67812.1"/>
    <property type="molecule type" value="Genomic_DNA"/>
</dbReference>
<dbReference type="RefSeq" id="WP_015935490.1">
    <property type="nucleotide sequence ID" value="NC_011891.1"/>
</dbReference>
<dbReference type="SMR" id="B8JCU2"/>
<dbReference type="KEGG" id="acp:A2cp1_4495"/>
<dbReference type="HOGENOM" id="CLU_041018_0_0_7"/>
<dbReference type="Proteomes" id="UP000007089">
    <property type="component" value="Chromosome"/>
</dbReference>
<dbReference type="GO" id="GO:0005886">
    <property type="term" value="C:plasma membrane"/>
    <property type="evidence" value="ECO:0007669"/>
    <property type="project" value="UniProtKB-SubCell"/>
</dbReference>
<dbReference type="GO" id="GO:0045259">
    <property type="term" value="C:proton-transporting ATP synthase complex"/>
    <property type="evidence" value="ECO:0007669"/>
    <property type="project" value="UniProtKB-KW"/>
</dbReference>
<dbReference type="GO" id="GO:0046933">
    <property type="term" value="F:proton-transporting ATP synthase activity, rotational mechanism"/>
    <property type="evidence" value="ECO:0007669"/>
    <property type="project" value="UniProtKB-UniRule"/>
</dbReference>
<dbReference type="CDD" id="cd00310">
    <property type="entry name" value="ATP-synt_Fo_a_6"/>
    <property type="match status" value="1"/>
</dbReference>
<dbReference type="Gene3D" id="1.20.120.220">
    <property type="entry name" value="ATP synthase, F0 complex, subunit A"/>
    <property type="match status" value="1"/>
</dbReference>
<dbReference type="HAMAP" id="MF_01393">
    <property type="entry name" value="ATP_synth_a_bact"/>
    <property type="match status" value="1"/>
</dbReference>
<dbReference type="InterPro" id="IPR000568">
    <property type="entry name" value="ATP_synth_F0_asu"/>
</dbReference>
<dbReference type="InterPro" id="IPR023011">
    <property type="entry name" value="ATP_synth_F0_asu_AS"/>
</dbReference>
<dbReference type="InterPro" id="IPR045083">
    <property type="entry name" value="ATP_synth_F0_asu_bact/mt"/>
</dbReference>
<dbReference type="InterPro" id="IPR035908">
    <property type="entry name" value="F0_ATP_A_sf"/>
</dbReference>
<dbReference type="NCBIfam" id="TIGR01131">
    <property type="entry name" value="ATP_synt_6_or_A"/>
    <property type="match status" value="1"/>
</dbReference>
<dbReference type="NCBIfam" id="NF009953">
    <property type="entry name" value="PRK13419.1"/>
    <property type="match status" value="1"/>
</dbReference>
<dbReference type="PANTHER" id="PTHR11410">
    <property type="entry name" value="ATP SYNTHASE SUBUNIT A"/>
    <property type="match status" value="1"/>
</dbReference>
<dbReference type="PANTHER" id="PTHR11410:SF0">
    <property type="entry name" value="ATP SYNTHASE SUBUNIT A"/>
    <property type="match status" value="1"/>
</dbReference>
<dbReference type="Pfam" id="PF00119">
    <property type="entry name" value="ATP-synt_A"/>
    <property type="match status" value="1"/>
</dbReference>
<dbReference type="PRINTS" id="PR00123">
    <property type="entry name" value="ATPASEA"/>
</dbReference>
<dbReference type="SUPFAM" id="SSF81336">
    <property type="entry name" value="F1F0 ATP synthase subunit A"/>
    <property type="match status" value="1"/>
</dbReference>
<dbReference type="PROSITE" id="PS00449">
    <property type="entry name" value="ATPASE_A"/>
    <property type="match status" value="1"/>
</dbReference>